<feature type="chain" id="PRO_0000152486" description="Phospholipase A and acyltransferase 3">
    <location>
        <begin position="1"/>
        <end position="162"/>
    </location>
</feature>
<feature type="topological domain" description="Cytoplasmic" evidence="4">
    <location>
        <begin position="1"/>
        <end position="133"/>
    </location>
</feature>
<feature type="transmembrane region" description="Helical" evidence="4">
    <location>
        <begin position="134"/>
        <end position="154"/>
    </location>
</feature>
<feature type="topological domain" description="Lumenal" evidence="4">
    <location>
        <begin position="155"/>
        <end position="162"/>
    </location>
</feature>
<feature type="domain" description="LRAT" evidence="5">
    <location>
        <begin position="13"/>
        <end position="129"/>
    </location>
</feature>
<feature type="active site" evidence="5">
    <location>
        <position position="23"/>
    </location>
</feature>
<feature type="active site" evidence="5">
    <location>
        <position position="35"/>
    </location>
</feature>
<feature type="active site" description="Acyl-thioester intermediate" evidence="1 5">
    <location>
        <position position="113"/>
    </location>
</feature>
<evidence type="ECO:0000250" key="1">
    <source>
        <dbReference type="UniProtKB" id="P53816"/>
    </source>
</evidence>
<evidence type="ECO:0000250" key="2">
    <source>
        <dbReference type="UniProtKB" id="P53817"/>
    </source>
</evidence>
<evidence type="ECO:0000250" key="3">
    <source>
        <dbReference type="UniProtKB" id="Q8R3U1"/>
    </source>
</evidence>
<evidence type="ECO:0000255" key="4"/>
<evidence type="ECO:0000255" key="5">
    <source>
        <dbReference type="PROSITE-ProRule" id="PRU01283"/>
    </source>
</evidence>
<evidence type="ECO:0000305" key="6"/>
<comment type="function">
    <text evidence="1 3">Exhibits both phospholipase A1/2 and acyltransferase activities (By similarity). Shows phospholipase A1 (PLA1) and A2 (PLA2), catalyzing the calcium-independent release of fatty acids from the sn-1 or sn-2 position of glycerophospholipids (By similarity). For most substrates, PLA1 activity is much higher than PLA2 activity (By similarity). Shows O-acyltransferase activity, catalyzing the transfer of a fatty acyl group from glycerophospholipid to the hydroxyl group of lysophospholipid (By similarity). Shows N-acyltransferase activity, catalyzing the calcium-independent transfer of a fatty acyl group at the sn-1 position of phosphatidylcholine (PC) and other glycerophospholipids to the primary amine of phosphatidylethanolamine (PE), forming N-acylphosphatidylethanolamine (NAPE), which serves as precursor for N-acylethanolamines (NAEs) (By similarity). Exhibits high N-acyltransferase activity and low phospholipase A1/2 activity (By similarity). Required for complete organelle rupture and degradation that occur during eye lens terminal differentiation, when fiber cells that compose the lens degrade all membrane-bound organelles in order to provide lens with transparency to allow the passage of light. Organelle membrane degradation is probably catalyzed by the phospholipase activity (By similarity). Plays a role in phospholipid metabolism and adipogenesis.</text>
</comment>
<comment type="catalytic activity">
    <reaction evidence="1">
        <text>a 1,2-diacyl-sn-glycero-3-phosphocholine + H2O = a 1-acyl-sn-glycero-3-phosphocholine + a fatty acid + H(+)</text>
        <dbReference type="Rhea" id="RHEA:15801"/>
        <dbReference type="ChEBI" id="CHEBI:15377"/>
        <dbReference type="ChEBI" id="CHEBI:15378"/>
        <dbReference type="ChEBI" id="CHEBI:28868"/>
        <dbReference type="ChEBI" id="CHEBI:57643"/>
        <dbReference type="ChEBI" id="CHEBI:58168"/>
        <dbReference type="EC" id="3.1.1.4"/>
    </reaction>
    <physiologicalReaction direction="left-to-right" evidence="1">
        <dbReference type="Rhea" id="RHEA:15802"/>
    </physiologicalReaction>
</comment>
<comment type="catalytic activity">
    <reaction evidence="1">
        <text>a 1,2-diacyl-sn-glycero-3-phosphocholine + H2O = a 2-acyl-sn-glycero-3-phosphocholine + a fatty acid + H(+)</text>
        <dbReference type="Rhea" id="RHEA:18689"/>
        <dbReference type="ChEBI" id="CHEBI:15377"/>
        <dbReference type="ChEBI" id="CHEBI:15378"/>
        <dbReference type="ChEBI" id="CHEBI:28868"/>
        <dbReference type="ChEBI" id="CHEBI:57643"/>
        <dbReference type="ChEBI" id="CHEBI:57875"/>
        <dbReference type="EC" id="3.1.1.32"/>
    </reaction>
    <physiologicalReaction direction="left-to-right" evidence="1">
        <dbReference type="Rhea" id="RHEA:18690"/>
    </physiologicalReaction>
</comment>
<comment type="catalytic activity">
    <reaction evidence="1">
        <text>1,2-dihexadecanoyl-sn-glycero-3-phosphocholine + H2O = 1-hexadecanoyl-sn-glycero-3-phosphocholine + hexadecanoate + H(+)</text>
        <dbReference type="Rhea" id="RHEA:41223"/>
        <dbReference type="ChEBI" id="CHEBI:7896"/>
        <dbReference type="ChEBI" id="CHEBI:15377"/>
        <dbReference type="ChEBI" id="CHEBI:15378"/>
        <dbReference type="ChEBI" id="CHEBI:72998"/>
        <dbReference type="ChEBI" id="CHEBI:72999"/>
    </reaction>
    <physiologicalReaction direction="left-to-right" evidence="1">
        <dbReference type="Rhea" id="RHEA:41224"/>
    </physiologicalReaction>
</comment>
<comment type="catalytic activity">
    <reaction evidence="1">
        <text>1,2-dihexadecanoyl-sn-glycero-3-phosphocholine + H2O = 2-hexadecanoyl-sn-glycero-3-phosphocholine + hexadecanoate + H(+)</text>
        <dbReference type="Rhea" id="RHEA:40487"/>
        <dbReference type="ChEBI" id="CHEBI:7896"/>
        <dbReference type="ChEBI" id="CHEBI:15377"/>
        <dbReference type="ChEBI" id="CHEBI:15378"/>
        <dbReference type="ChEBI" id="CHEBI:72999"/>
        <dbReference type="ChEBI" id="CHEBI:76078"/>
    </reaction>
    <physiologicalReaction direction="left-to-right" evidence="1">
        <dbReference type="Rhea" id="RHEA:40488"/>
    </physiologicalReaction>
</comment>
<comment type="catalytic activity">
    <reaction evidence="1">
        <text>1-hexadecanoyl-2-(9Z-octadecenoyl)-sn-glycero-3-phosphocholine + H2O = 2-(9Z-octadecenoyl)-sn-glycero-3-phosphocholine + hexadecanoate + H(+)</text>
        <dbReference type="Rhea" id="RHEA:38783"/>
        <dbReference type="ChEBI" id="CHEBI:7896"/>
        <dbReference type="ChEBI" id="CHEBI:15377"/>
        <dbReference type="ChEBI" id="CHEBI:15378"/>
        <dbReference type="ChEBI" id="CHEBI:73001"/>
        <dbReference type="ChEBI" id="CHEBI:76071"/>
    </reaction>
    <physiologicalReaction direction="left-to-right" evidence="1">
        <dbReference type="Rhea" id="RHEA:38784"/>
    </physiologicalReaction>
</comment>
<comment type="catalytic activity">
    <reaction evidence="1">
        <text>1-hexadecanoyl-2-(9Z-octadecenoyl)-sn-glycero-3-phosphocholine + H2O = 1-hexadecanoyl-sn-glycero-3-phosphocholine + (9Z)-octadecenoate + H(+)</text>
        <dbReference type="Rhea" id="RHEA:38779"/>
        <dbReference type="ChEBI" id="CHEBI:15377"/>
        <dbReference type="ChEBI" id="CHEBI:15378"/>
        <dbReference type="ChEBI" id="CHEBI:30823"/>
        <dbReference type="ChEBI" id="CHEBI:72998"/>
        <dbReference type="ChEBI" id="CHEBI:73001"/>
    </reaction>
    <physiologicalReaction direction="left-to-right" evidence="1">
        <dbReference type="Rhea" id="RHEA:38780"/>
    </physiologicalReaction>
</comment>
<comment type="catalytic activity">
    <reaction evidence="1">
        <text>1-hexadecanoyl-2-(5Z,8Z,11Z,14Z-eicosatetraenoyl)-sn-glycero-3-phosphocholine + H2O = 1-hexadecanoyl-sn-glycero-3-phosphocholine + (5Z,8Z,11Z,14Z)-eicosatetraenoate + H(+)</text>
        <dbReference type="Rhea" id="RHEA:40427"/>
        <dbReference type="ChEBI" id="CHEBI:15377"/>
        <dbReference type="ChEBI" id="CHEBI:15378"/>
        <dbReference type="ChEBI" id="CHEBI:32395"/>
        <dbReference type="ChEBI" id="CHEBI:72998"/>
        <dbReference type="ChEBI" id="CHEBI:73003"/>
    </reaction>
    <physiologicalReaction direction="left-to-right" evidence="1">
        <dbReference type="Rhea" id="RHEA:40428"/>
    </physiologicalReaction>
</comment>
<comment type="catalytic activity">
    <reaction evidence="1">
        <text>1-hexadecanoyl-2-(5Z,8Z,11Z,14Z-eicosatetraenoyl)-sn-glycero-3-phosphocholine + H2O = 2-(5Z,8Z,11Z,14Z)-eicosatetraenoyl-sn-glycero-3-phosphocholine + hexadecanoate + H(+)</text>
        <dbReference type="Rhea" id="RHEA:40571"/>
        <dbReference type="ChEBI" id="CHEBI:7896"/>
        <dbReference type="ChEBI" id="CHEBI:15377"/>
        <dbReference type="ChEBI" id="CHEBI:15378"/>
        <dbReference type="ChEBI" id="CHEBI:73003"/>
        <dbReference type="ChEBI" id="CHEBI:76079"/>
    </reaction>
    <physiologicalReaction direction="left-to-right" evidence="1">
        <dbReference type="Rhea" id="RHEA:40572"/>
    </physiologicalReaction>
</comment>
<comment type="catalytic activity">
    <reaction evidence="1">
        <text>1-hexadecanoyl-2-(9Z,12Z-octadecadienoyl)-sn-glycero-3-phosphoethanolamine + H2O = 1-hexadecanoyl-sn-glycero-3-phosphoethanolamine + (9Z,12Z)-octadecadienoate + H(+)</text>
        <dbReference type="Rhea" id="RHEA:40815"/>
        <dbReference type="ChEBI" id="CHEBI:15377"/>
        <dbReference type="ChEBI" id="CHEBI:15378"/>
        <dbReference type="ChEBI" id="CHEBI:30245"/>
        <dbReference type="ChEBI" id="CHEBI:73004"/>
        <dbReference type="ChEBI" id="CHEBI:73008"/>
    </reaction>
    <physiologicalReaction direction="left-to-right" evidence="1">
        <dbReference type="Rhea" id="RHEA:40816"/>
    </physiologicalReaction>
</comment>
<comment type="catalytic activity">
    <reaction evidence="1">
        <text>1-hexadecanoyl-2-(9Z,12Z-octadecadienoyl)-sn-glycero-3-phosphoethanolamine + H2O = 2-(9Z,12Z)-octadecadienoyl-sn-glycero-3-phosphoethanolamine + hexadecanoate + H(+)</text>
        <dbReference type="Rhea" id="RHEA:45164"/>
        <dbReference type="ChEBI" id="CHEBI:7896"/>
        <dbReference type="ChEBI" id="CHEBI:15377"/>
        <dbReference type="ChEBI" id="CHEBI:15378"/>
        <dbReference type="ChEBI" id="CHEBI:73008"/>
        <dbReference type="ChEBI" id="CHEBI:76090"/>
    </reaction>
    <physiologicalReaction direction="left-to-right" evidence="1">
        <dbReference type="Rhea" id="RHEA:45165"/>
    </physiologicalReaction>
</comment>
<comment type="catalytic activity">
    <reaction evidence="1">
        <text>1-hexadecanoyl-2-(5Z,8Z,11Z,14Z-eicosatetraenoyl)-sn-glycero-3-phosphoethanolamine + H2O = 1-hexadecanoyl-sn-glycero-3-phosphoethanolamine + (5Z,8Z,11Z,14Z)-eicosatetraenoate + H(+)</text>
        <dbReference type="Rhea" id="RHEA:40431"/>
        <dbReference type="ChEBI" id="CHEBI:15377"/>
        <dbReference type="ChEBI" id="CHEBI:15378"/>
        <dbReference type="ChEBI" id="CHEBI:32395"/>
        <dbReference type="ChEBI" id="CHEBI:73004"/>
        <dbReference type="ChEBI" id="CHEBI:73009"/>
    </reaction>
    <physiologicalReaction direction="left-to-right" evidence="1">
        <dbReference type="Rhea" id="RHEA:40432"/>
    </physiologicalReaction>
</comment>
<comment type="catalytic activity">
    <reaction evidence="1">
        <text>1-hexadecanoyl-2-(5Z,8Z,11Z,14Z-eicosatetraenoyl)-sn-glycero-3-phosphoethanolamine + H2O = 2-(5Z,8Z,11Z,14Z)-eicosatetraenoyl-sn-glycero-3-phosphoethanolamine + hexadecanoate + H(+)</text>
        <dbReference type="Rhea" id="RHEA:41348"/>
        <dbReference type="ChEBI" id="CHEBI:7896"/>
        <dbReference type="ChEBI" id="CHEBI:15377"/>
        <dbReference type="ChEBI" id="CHEBI:15378"/>
        <dbReference type="ChEBI" id="CHEBI:73009"/>
        <dbReference type="ChEBI" id="CHEBI:76091"/>
    </reaction>
    <physiologicalReaction direction="left-to-right" evidence="1">
        <dbReference type="Rhea" id="RHEA:41349"/>
    </physiologicalReaction>
</comment>
<comment type="catalytic activity">
    <reaction evidence="1">
        <text>1-hexanoyl-2-acyl-sn-glycero-3-phosphocholine + H2O = hexanoate + a 2-acyl-sn-glycero-3-phosphocholine + H(+)</text>
        <dbReference type="Rhea" id="RHEA:53496"/>
        <dbReference type="ChEBI" id="CHEBI:15377"/>
        <dbReference type="ChEBI" id="CHEBI:15378"/>
        <dbReference type="ChEBI" id="CHEBI:17120"/>
        <dbReference type="ChEBI" id="CHEBI:57875"/>
        <dbReference type="ChEBI" id="CHEBI:137403"/>
    </reaction>
    <physiologicalReaction direction="left-to-right" evidence="1">
        <dbReference type="Rhea" id="RHEA:53497"/>
    </physiologicalReaction>
</comment>
<comment type="catalytic activity">
    <reaction evidence="1">
        <text>1-hexanoyl-2-acyl-sn-glycero-3-phosphocholine + H2O = 1-hexanoyl-sn-glycero-3-phosphocholine + a fatty acid + H(+)</text>
        <dbReference type="Rhea" id="RHEA:53500"/>
        <dbReference type="ChEBI" id="CHEBI:15377"/>
        <dbReference type="ChEBI" id="CHEBI:15378"/>
        <dbReference type="ChEBI" id="CHEBI:28868"/>
        <dbReference type="ChEBI" id="CHEBI:78215"/>
        <dbReference type="ChEBI" id="CHEBI:137403"/>
    </reaction>
    <physiologicalReaction direction="left-to-right" evidence="1">
        <dbReference type="Rhea" id="RHEA:53501"/>
    </physiologicalReaction>
</comment>
<comment type="catalytic activity">
    <reaction evidence="1">
        <text>1,2-diheptadecanoyl-sn-glycero-3-phosphoethanolamine + 1-(9Z-octadecenoyl)-2-hexadecanoyl-sn-glycero-3-phosphocholine = 1,2-diheptadecanoyl-sn-glycero-3-phospho-N-hexadecanoyl-ethanolamine + 1-(9Z-octadecenoyl)-sn-glycero-3-phosphocholine + H(+)</text>
        <dbReference type="Rhea" id="RHEA:53524"/>
        <dbReference type="ChEBI" id="CHEBI:15378"/>
        <dbReference type="ChEBI" id="CHEBI:28610"/>
        <dbReference type="ChEBI" id="CHEBI:74667"/>
        <dbReference type="ChEBI" id="CHEBI:138218"/>
        <dbReference type="ChEBI" id="CHEBI:138220"/>
    </reaction>
    <physiologicalReaction direction="left-to-right" evidence="1">
        <dbReference type="Rhea" id="RHEA:53525"/>
    </physiologicalReaction>
</comment>
<comment type="catalytic activity">
    <reaction evidence="1">
        <text>1,2-diheptadecanoyl-sn-glycero-3-phosphoethanolamine + 1-(9Z-octadecenoyl)-2-hexadecanoyl-sn-glycero-3-phosphocholine = 1,2-diheptadecanoyl-sn-glycero-3-phospho-N-(9Z-octadecenoyl)-ethanolamine + 2-hexadecanoyl-sn-glycero-3-phosphocholine + H(+)</text>
        <dbReference type="Rhea" id="RHEA:53528"/>
        <dbReference type="ChEBI" id="CHEBI:15378"/>
        <dbReference type="ChEBI" id="CHEBI:74667"/>
        <dbReference type="ChEBI" id="CHEBI:76078"/>
        <dbReference type="ChEBI" id="CHEBI:138218"/>
        <dbReference type="ChEBI" id="CHEBI:138222"/>
    </reaction>
    <physiologicalReaction direction="left-to-right" evidence="1">
        <dbReference type="Rhea" id="RHEA:53529"/>
    </physiologicalReaction>
</comment>
<comment type="catalytic activity">
    <reaction evidence="1">
        <text>1,2-dihexanoyl-sn-glycero-3-phosphoethanolamine + 2-heptanoyl-sn-glycero-3-phosphocholine = hexanoyl-sn-glycero-3-phosphoethanolamine + 1-hexanoyl-2-heptanoyl-sn-glycero-3-phosphocholine</text>
        <dbReference type="Rhea" id="RHEA:54544"/>
        <dbReference type="ChEBI" id="CHEBI:138197"/>
        <dbReference type="ChEBI" id="CHEBI:138216"/>
        <dbReference type="ChEBI" id="CHEBI:138266"/>
        <dbReference type="ChEBI" id="CHEBI:138267"/>
    </reaction>
    <physiologicalReaction direction="left-to-right" evidence="1">
        <dbReference type="Rhea" id="RHEA:54545"/>
    </physiologicalReaction>
</comment>
<comment type="catalytic activity">
    <reaction evidence="1">
        <text>1-hexadecanoyl-2-octadecanoyl-sn-glycero-3-phosphocholine + H2O = octadecanoate + 1-hexadecanoyl-sn-glycero-3-phosphocholine + H(+)</text>
        <dbReference type="Rhea" id="RHEA:56432"/>
        <dbReference type="ChEBI" id="CHEBI:15377"/>
        <dbReference type="ChEBI" id="CHEBI:15378"/>
        <dbReference type="ChEBI" id="CHEBI:25629"/>
        <dbReference type="ChEBI" id="CHEBI:72998"/>
        <dbReference type="ChEBI" id="CHEBI:73000"/>
    </reaction>
    <physiologicalReaction direction="left-to-right" evidence="1">
        <dbReference type="Rhea" id="RHEA:56433"/>
    </physiologicalReaction>
</comment>
<comment type="catalytic activity">
    <reaction evidence="1">
        <text>1-hexadecanoyl-2-octadecanoyl-sn-glycero-3-phosphocholine + H2O = 2-octadecanoyl-sn-glycero-3-phosphocholine + hexadecanoate + H(+)</text>
        <dbReference type="Rhea" id="RHEA:56436"/>
        <dbReference type="ChEBI" id="CHEBI:7896"/>
        <dbReference type="ChEBI" id="CHEBI:15377"/>
        <dbReference type="ChEBI" id="CHEBI:15378"/>
        <dbReference type="ChEBI" id="CHEBI:73000"/>
        <dbReference type="ChEBI" id="CHEBI:76076"/>
    </reaction>
    <physiologicalReaction direction="left-to-right" evidence="1">
        <dbReference type="Rhea" id="RHEA:56437"/>
    </physiologicalReaction>
</comment>
<comment type="catalytic activity">
    <reaction evidence="1">
        <text>1-octadecanoyl-2-hexadecanoyl-sn-glycero-3-phosphocholine + H2O = 1-octadecanoyl-sn-glycero-3-phosphocholine + hexadecanoate + H(+)</text>
        <dbReference type="Rhea" id="RHEA:56440"/>
        <dbReference type="ChEBI" id="CHEBI:7896"/>
        <dbReference type="ChEBI" id="CHEBI:15377"/>
        <dbReference type="ChEBI" id="CHEBI:15378"/>
        <dbReference type="ChEBI" id="CHEBI:73858"/>
        <dbReference type="ChEBI" id="CHEBI:75026"/>
    </reaction>
    <physiologicalReaction direction="left-to-right" evidence="1">
        <dbReference type="Rhea" id="RHEA:56441"/>
    </physiologicalReaction>
</comment>
<comment type="catalytic activity">
    <reaction evidence="1">
        <text>1-octadecanoyl-2-hexadecanoyl-sn-glycero-3-phosphocholine + H2O = 2-hexadecanoyl-sn-glycero-3-phosphocholine + octadecanoate + H(+)</text>
        <dbReference type="Rhea" id="RHEA:56444"/>
        <dbReference type="ChEBI" id="CHEBI:15377"/>
        <dbReference type="ChEBI" id="CHEBI:15378"/>
        <dbReference type="ChEBI" id="CHEBI:25629"/>
        <dbReference type="ChEBI" id="CHEBI:75026"/>
        <dbReference type="ChEBI" id="CHEBI:76078"/>
    </reaction>
    <physiologicalReaction direction="left-to-right" evidence="1">
        <dbReference type="Rhea" id="RHEA:56445"/>
    </physiologicalReaction>
</comment>
<comment type="catalytic activity">
    <reaction evidence="1">
        <text>1-hexadecanoyl-2-(9Z,12Z-octadecadienoyl)-sn-glycero-3-phosphocholine + H2O = (9Z,12Z)-octadecadienoate + 1-hexadecanoyl-sn-glycero-3-phosphocholine + H(+)</text>
        <dbReference type="Rhea" id="RHEA:40811"/>
        <dbReference type="ChEBI" id="CHEBI:15377"/>
        <dbReference type="ChEBI" id="CHEBI:15378"/>
        <dbReference type="ChEBI" id="CHEBI:30245"/>
        <dbReference type="ChEBI" id="CHEBI:72998"/>
        <dbReference type="ChEBI" id="CHEBI:73002"/>
    </reaction>
    <physiologicalReaction direction="left-to-right" evidence="1">
        <dbReference type="Rhea" id="RHEA:40812"/>
    </physiologicalReaction>
</comment>
<comment type="catalytic activity">
    <reaction evidence="1">
        <text>1-hexadecanoyl-2-(9Z,12Z-octadecadienoyl)-sn-glycero-3-phosphocholine + H2O = 2-(9Z,12Z-octadecadienoyl)-sn-glycero-3-phosphocholine + hexadecanoate + H(+)</text>
        <dbReference type="Rhea" id="RHEA:40971"/>
        <dbReference type="ChEBI" id="CHEBI:7896"/>
        <dbReference type="ChEBI" id="CHEBI:15377"/>
        <dbReference type="ChEBI" id="CHEBI:15378"/>
        <dbReference type="ChEBI" id="CHEBI:73002"/>
        <dbReference type="ChEBI" id="CHEBI:76084"/>
    </reaction>
    <physiologicalReaction direction="left-to-right" evidence="1">
        <dbReference type="Rhea" id="RHEA:40972"/>
    </physiologicalReaction>
</comment>
<comment type="catalytic activity">
    <reaction evidence="1">
        <text>1,2-di-(9Z-octadecenoyl)-sn-glycero-3-phosphocholine + H2O = 2-(9Z-octadecenoyl)-sn-glycero-3-phosphocholine + (9Z)-octadecenoate + H(+)</text>
        <dbReference type="Rhea" id="RHEA:56448"/>
        <dbReference type="ChEBI" id="CHEBI:15377"/>
        <dbReference type="ChEBI" id="CHEBI:15378"/>
        <dbReference type="ChEBI" id="CHEBI:30823"/>
        <dbReference type="ChEBI" id="CHEBI:74669"/>
        <dbReference type="ChEBI" id="CHEBI:76071"/>
    </reaction>
    <physiologicalReaction direction="left-to-right" evidence="1">
        <dbReference type="Rhea" id="RHEA:56449"/>
    </physiologicalReaction>
</comment>
<comment type="catalytic activity">
    <reaction evidence="1">
        <text>1,2-dihexadecanoyl-sn-glycero-3-phosphocholine + H2O = hexadecanoyl-sn-glycero-3-phosphocholine + hexadecanoate + H(+)</text>
        <dbReference type="Rhea" id="RHEA:41384"/>
        <dbReference type="ChEBI" id="CHEBI:7896"/>
        <dbReference type="ChEBI" id="CHEBI:15377"/>
        <dbReference type="ChEBI" id="CHEBI:15378"/>
        <dbReference type="ChEBI" id="CHEBI:64563"/>
        <dbReference type="ChEBI" id="CHEBI:72999"/>
    </reaction>
    <physiologicalReaction direction="left-to-right" evidence="1">
        <dbReference type="Rhea" id="RHEA:41385"/>
    </physiologicalReaction>
</comment>
<comment type="catalytic activity">
    <reaction evidence="1">
        <text>1,2-di-(9Z-octadecenoyl)-sn-glycero-3-phosphocholine + H2O = 1-(9Z-octadecenoyl)-sn-glycero-3-phosphocholine + (9Z)-octadecenoate + H(+)</text>
        <dbReference type="Rhea" id="RHEA:40923"/>
        <dbReference type="ChEBI" id="CHEBI:15377"/>
        <dbReference type="ChEBI" id="CHEBI:15378"/>
        <dbReference type="ChEBI" id="CHEBI:28610"/>
        <dbReference type="ChEBI" id="CHEBI:30823"/>
        <dbReference type="ChEBI" id="CHEBI:74669"/>
    </reaction>
    <physiologicalReaction direction="left-to-right" evidence="1">
        <dbReference type="Rhea" id="RHEA:40924"/>
    </physiologicalReaction>
</comment>
<comment type="catalytic activity">
    <reaction evidence="2">
        <text>1,2-di-(9Z-octadecenoyl)-sn-glycero-3-phosphoethanolamine + 1,2-dihexadecanoyl-sn-glycero-3-phosphocholine = hexadecanoyl-sn-glycero-3-phosphocholine + N-hexadecanoyl-1,2-di-(9Z-octadecenoyl)-sn-glycero-3-phosphoethanolamine + H(+)</text>
        <dbReference type="Rhea" id="RHEA:41360"/>
        <dbReference type="ChEBI" id="CHEBI:15378"/>
        <dbReference type="ChEBI" id="CHEBI:64563"/>
        <dbReference type="ChEBI" id="CHEBI:72999"/>
        <dbReference type="ChEBI" id="CHEBI:74986"/>
        <dbReference type="ChEBI" id="CHEBI:78097"/>
    </reaction>
    <physiologicalReaction direction="left-to-right" evidence="2">
        <dbReference type="Rhea" id="RHEA:41361"/>
    </physiologicalReaction>
</comment>
<comment type="catalytic activity">
    <reaction evidence="3">
        <text>1,2-di-(9Z,12Z-octadecadienoyl)-sn-glycero-3-phosphocholine + H2O = 1-(9Z,12Z)-octadecadienoyl-sn-glycero-3-phosphocholine + (9Z,12Z)-octadecadienoate + H(+)</text>
        <dbReference type="Rhea" id="RHEA:56428"/>
        <dbReference type="ChEBI" id="CHEBI:15377"/>
        <dbReference type="ChEBI" id="CHEBI:15378"/>
        <dbReference type="ChEBI" id="CHEBI:28733"/>
        <dbReference type="ChEBI" id="CHEBI:30245"/>
        <dbReference type="ChEBI" id="CHEBI:42027"/>
    </reaction>
    <physiologicalReaction direction="left-to-right" evidence="3">
        <dbReference type="Rhea" id="RHEA:56429"/>
    </physiologicalReaction>
</comment>
<comment type="subunit">
    <text evidence="1">Interacts with PPP2R1A; this interaction might decrease PP2A activity.</text>
</comment>
<comment type="subcellular location">
    <subcellularLocation>
        <location evidence="2">Cell membrane</location>
        <topology evidence="4">Single-pass membrane protein</topology>
    </subcellularLocation>
    <subcellularLocation>
        <location evidence="1">Cytoplasm</location>
    </subcellularLocation>
    <subcellularLocation>
        <location evidence="3">Cytoplasm</location>
        <location evidence="3">Cytosol</location>
    </subcellularLocation>
    <subcellularLocation>
        <location evidence="3">Cytoplasm</location>
        <location evidence="3">Perinuclear region</location>
    </subcellularLocation>
    <subcellularLocation>
        <location evidence="3">Peroxisome membrane</location>
        <topology evidence="6">Single-pass membrane protein</topology>
    </subcellularLocation>
    <subcellularLocation>
        <location evidence="3">Mitochondrion membrane</location>
        <topology evidence="6">Single-pass membrane protein</topology>
    </subcellularLocation>
    <subcellularLocation>
        <location evidence="3">Nucleus envelope</location>
    </subcellularLocation>
    <subcellularLocation>
        <location evidence="3">Lysosome membrane</location>
        <topology evidence="6">Single-pass membrane protein</topology>
    </subcellularLocation>
    <subcellularLocation>
        <location evidence="3">Endoplasmic reticulum membrane</location>
        <topology evidence="6">Single-pass membrane protein</topology>
    </subcellularLocation>
    <text evidence="3">During eye lens differentiation, recruited from the cytosol to various organelles, including mitochondria, endoplasmic reticulum, nuclear envelope and lysosomes, immediately before organelle degradation. This translocation is triggered by organelle membrane damage and requires the C-terminal transmembrane domain.</text>
</comment>
<comment type="domain">
    <text evidence="3">The C-terminal transmembrane domain is required for the targeting of the protein to damaged organelles.</text>
</comment>
<comment type="similarity">
    <text evidence="6">Belongs to the H-rev107 family.</text>
</comment>
<name>PLAT3_PONAB</name>
<gene>
    <name evidence="1" type="primary">PLAAT3</name>
    <name evidence="1" type="synonym">HRASLS3</name>
    <name evidence="1" type="synonym">HREV107</name>
    <name evidence="1" type="synonym">PLA2G16</name>
</gene>
<organism>
    <name type="scientific">Pongo abelii</name>
    <name type="common">Sumatran orangutan</name>
    <name type="synonym">Pongo pygmaeus abelii</name>
    <dbReference type="NCBI Taxonomy" id="9601"/>
    <lineage>
        <taxon>Eukaryota</taxon>
        <taxon>Metazoa</taxon>
        <taxon>Chordata</taxon>
        <taxon>Craniata</taxon>
        <taxon>Vertebrata</taxon>
        <taxon>Euteleostomi</taxon>
        <taxon>Mammalia</taxon>
        <taxon>Eutheria</taxon>
        <taxon>Euarchontoglires</taxon>
        <taxon>Primates</taxon>
        <taxon>Haplorrhini</taxon>
        <taxon>Catarrhini</taxon>
        <taxon>Hominidae</taxon>
        <taxon>Pongo</taxon>
    </lineage>
</organism>
<reference key="1">
    <citation type="submission" date="2004-11" db="EMBL/GenBank/DDBJ databases">
        <authorList>
            <consortium name="The German cDNA consortium"/>
        </authorList>
    </citation>
    <scope>NUCLEOTIDE SEQUENCE [LARGE SCALE MRNA]</scope>
    <source>
        <tissue>Brain cortex</tissue>
    </source>
</reference>
<sequence>MRAPIPEPKPGDLIEIFRPFYRHWAIYVGDGYVVHLAPPSEVAGAGAASVMSALTDKAIVKKELLYDVAGSDKYQVNNKHDDKYSPLPCSKIIQRAEELVGQEVLYKLTSENCEHFVNELRYGVARSDQVRDVIIAASAAGMGLAAMSLIGVMFSRNKRQKQ</sequence>
<proteinExistence type="evidence at transcript level"/>
<keyword id="KW-1003">Cell membrane</keyword>
<keyword id="KW-0963">Cytoplasm</keyword>
<keyword id="KW-0256">Endoplasmic reticulum</keyword>
<keyword id="KW-0378">Hydrolase</keyword>
<keyword id="KW-0442">Lipid degradation</keyword>
<keyword id="KW-0443">Lipid metabolism</keyword>
<keyword id="KW-0458">Lysosome</keyword>
<keyword id="KW-0472">Membrane</keyword>
<keyword id="KW-0496">Mitochondrion</keyword>
<keyword id="KW-0539">Nucleus</keyword>
<keyword id="KW-0576">Peroxisome</keyword>
<keyword id="KW-1185">Reference proteome</keyword>
<keyword id="KW-0808">Transferase</keyword>
<keyword id="KW-0812">Transmembrane</keyword>
<keyword id="KW-1133">Transmembrane helix</keyword>
<protein>
    <recommendedName>
        <fullName evidence="1">Phospholipase A and acyltransferase 3</fullName>
        <ecNumber evidence="1">2.3.1.-</ecNumber>
        <ecNumber evidence="1">3.1.1.32</ecNumber>
        <ecNumber evidence="1">3.1.1.4</ecNumber>
    </recommendedName>
    <alternativeName>
        <fullName evidence="1">Group XVI phospholipase A2</fullName>
    </alternativeName>
    <alternativeName>
        <fullName evidence="1">H-rev 107 protein homolog</fullName>
    </alternativeName>
    <alternativeName>
        <fullName evidence="1">HRAS-like suppressor 3</fullName>
        <shortName evidence="1">HRSL3</shortName>
    </alternativeName>
</protein>
<accession>Q5R611</accession>
<dbReference type="EC" id="2.3.1.-" evidence="1"/>
<dbReference type="EC" id="3.1.1.32" evidence="1"/>
<dbReference type="EC" id="3.1.1.4" evidence="1"/>
<dbReference type="EMBL" id="CR860689">
    <property type="protein sequence ID" value="CAH92805.1"/>
    <property type="molecule type" value="mRNA"/>
</dbReference>
<dbReference type="RefSeq" id="NP_001128980.1">
    <property type="nucleotide sequence ID" value="NM_001135508.1"/>
</dbReference>
<dbReference type="BMRB" id="Q5R611"/>
<dbReference type="SMR" id="Q5R611"/>
<dbReference type="FunCoup" id="Q5R611">
    <property type="interactions" value="432"/>
</dbReference>
<dbReference type="STRING" id="9601.ENSPPYP00000004679"/>
<dbReference type="GeneID" id="100190820"/>
<dbReference type="KEGG" id="pon:100190820"/>
<dbReference type="CTD" id="11145"/>
<dbReference type="eggNOG" id="ENOG502S0JN">
    <property type="taxonomic scope" value="Eukaryota"/>
</dbReference>
<dbReference type="InParanoid" id="Q5R611"/>
<dbReference type="OrthoDB" id="421951at2759"/>
<dbReference type="Proteomes" id="UP000001595">
    <property type="component" value="Unplaced"/>
</dbReference>
<dbReference type="GO" id="GO:0005829">
    <property type="term" value="C:cytosol"/>
    <property type="evidence" value="ECO:0000250"/>
    <property type="project" value="UniProtKB"/>
</dbReference>
<dbReference type="GO" id="GO:0005783">
    <property type="term" value="C:endoplasmic reticulum"/>
    <property type="evidence" value="ECO:0000250"/>
    <property type="project" value="UniProtKB"/>
</dbReference>
<dbReference type="GO" id="GO:0005789">
    <property type="term" value="C:endoplasmic reticulum membrane"/>
    <property type="evidence" value="ECO:0007669"/>
    <property type="project" value="UniProtKB-SubCell"/>
</dbReference>
<dbReference type="GO" id="GO:0005765">
    <property type="term" value="C:lysosomal membrane"/>
    <property type="evidence" value="ECO:0007669"/>
    <property type="project" value="UniProtKB-SubCell"/>
</dbReference>
<dbReference type="GO" id="GO:0005764">
    <property type="term" value="C:lysosome"/>
    <property type="evidence" value="ECO:0000250"/>
    <property type="project" value="UniProtKB"/>
</dbReference>
<dbReference type="GO" id="GO:0031966">
    <property type="term" value="C:mitochondrial membrane"/>
    <property type="evidence" value="ECO:0007669"/>
    <property type="project" value="UniProtKB-SubCell"/>
</dbReference>
<dbReference type="GO" id="GO:0005739">
    <property type="term" value="C:mitochondrion"/>
    <property type="evidence" value="ECO:0000250"/>
    <property type="project" value="UniProtKB"/>
</dbReference>
<dbReference type="GO" id="GO:0005635">
    <property type="term" value="C:nuclear envelope"/>
    <property type="evidence" value="ECO:0000250"/>
    <property type="project" value="UniProtKB"/>
</dbReference>
<dbReference type="GO" id="GO:0048471">
    <property type="term" value="C:perinuclear region of cytoplasm"/>
    <property type="evidence" value="ECO:0007669"/>
    <property type="project" value="UniProtKB-SubCell"/>
</dbReference>
<dbReference type="GO" id="GO:0005778">
    <property type="term" value="C:peroxisomal membrane"/>
    <property type="evidence" value="ECO:0007669"/>
    <property type="project" value="UniProtKB-SubCell"/>
</dbReference>
<dbReference type="GO" id="GO:0005777">
    <property type="term" value="C:peroxisome"/>
    <property type="evidence" value="ECO:0000250"/>
    <property type="project" value="UniProtKB"/>
</dbReference>
<dbReference type="GO" id="GO:0005886">
    <property type="term" value="C:plasma membrane"/>
    <property type="evidence" value="ECO:0007669"/>
    <property type="project" value="UniProtKB-SubCell"/>
</dbReference>
<dbReference type="GO" id="GO:0016410">
    <property type="term" value="F:N-acyltransferase activity"/>
    <property type="evidence" value="ECO:0000250"/>
    <property type="project" value="UniProtKB"/>
</dbReference>
<dbReference type="GO" id="GO:0008970">
    <property type="term" value="F:phospholipase A1 activity"/>
    <property type="evidence" value="ECO:0000250"/>
    <property type="project" value="UniProtKB"/>
</dbReference>
<dbReference type="GO" id="GO:0004623">
    <property type="term" value="F:phospholipase A2 activity"/>
    <property type="evidence" value="ECO:0000250"/>
    <property type="project" value="UniProtKB"/>
</dbReference>
<dbReference type="GO" id="GO:0004620">
    <property type="term" value="F:phospholipase activity"/>
    <property type="evidence" value="ECO:0000250"/>
    <property type="project" value="UniProtKB"/>
</dbReference>
<dbReference type="GO" id="GO:0046485">
    <property type="term" value="P:ether lipid metabolic process"/>
    <property type="evidence" value="ECO:0000250"/>
    <property type="project" value="UniProtKB"/>
</dbReference>
<dbReference type="GO" id="GO:0070306">
    <property type="term" value="P:lens fiber cell differentiation"/>
    <property type="evidence" value="ECO:0000250"/>
    <property type="project" value="UniProtKB"/>
</dbReference>
<dbReference type="GO" id="GO:0016042">
    <property type="term" value="P:lipid catabolic process"/>
    <property type="evidence" value="ECO:0000250"/>
    <property type="project" value="UniProtKB"/>
</dbReference>
<dbReference type="GO" id="GO:0030397">
    <property type="term" value="P:membrane disassembly"/>
    <property type="evidence" value="ECO:0000250"/>
    <property type="project" value="UniProtKB"/>
</dbReference>
<dbReference type="GO" id="GO:0070292">
    <property type="term" value="P:N-acylphosphatidylethanolamine metabolic process"/>
    <property type="evidence" value="ECO:0000250"/>
    <property type="project" value="UniProtKB"/>
</dbReference>
<dbReference type="GO" id="GO:1903008">
    <property type="term" value="P:organelle disassembly"/>
    <property type="evidence" value="ECO:0000250"/>
    <property type="project" value="UniProtKB"/>
</dbReference>
<dbReference type="GO" id="GO:0007031">
    <property type="term" value="P:peroxisome organization"/>
    <property type="evidence" value="ECO:0000250"/>
    <property type="project" value="UniProtKB"/>
</dbReference>
<dbReference type="GO" id="GO:0006644">
    <property type="term" value="P:phospholipid metabolic process"/>
    <property type="evidence" value="ECO:0000250"/>
    <property type="project" value="UniProtKB"/>
</dbReference>
<dbReference type="GO" id="GO:1904177">
    <property type="term" value="P:regulation of adipose tissue development"/>
    <property type="evidence" value="ECO:0000250"/>
    <property type="project" value="UniProtKB"/>
</dbReference>
<dbReference type="GO" id="GO:0006641">
    <property type="term" value="P:triglyceride metabolic process"/>
    <property type="evidence" value="ECO:0000250"/>
    <property type="project" value="UniProtKB"/>
</dbReference>
<dbReference type="FunFam" id="3.90.1720.10:FF:000002">
    <property type="entry name" value="HRAS like suppressor 2"/>
    <property type="match status" value="1"/>
</dbReference>
<dbReference type="Gene3D" id="3.90.1720.10">
    <property type="entry name" value="endopeptidase domain like (from Nostoc punctiforme)"/>
    <property type="match status" value="1"/>
</dbReference>
<dbReference type="InterPro" id="IPR051496">
    <property type="entry name" value="H-rev107_PLA/AT"/>
</dbReference>
<dbReference type="InterPro" id="IPR007053">
    <property type="entry name" value="LRAT_dom"/>
</dbReference>
<dbReference type="PANTHER" id="PTHR13943">
    <property type="entry name" value="HRAS-LIKE SUPPRESSOR - RELATED"/>
    <property type="match status" value="1"/>
</dbReference>
<dbReference type="PANTHER" id="PTHR13943:SF31">
    <property type="entry name" value="PHOSPHOLIPASE A AND ACYLTRANSFERASE 3"/>
    <property type="match status" value="1"/>
</dbReference>
<dbReference type="Pfam" id="PF04970">
    <property type="entry name" value="LRAT"/>
    <property type="match status" value="1"/>
</dbReference>
<dbReference type="PROSITE" id="PS51934">
    <property type="entry name" value="LRAT"/>
    <property type="match status" value="1"/>
</dbReference>